<reference key="1">
    <citation type="journal article" date="2006" name="Proc. Natl. Acad. Sci. U.S.A.">
        <title>The partitioned Rhizobium etli genome: genetic and metabolic redundancy in seven interacting replicons.</title>
        <authorList>
            <person name="Gonzalez V."/>
            <person name="Santamaria R.I."/>
            <person name="Bustos P."/>
            <person name="Hernandez-Gonzalez I."/>
            <person name="Medrano-Soto A."/>
            <person name="Moreno-Hagelsieb G."/>
            <person name="Janga S.C."/>
            <person name="Ramirez M.A."/>
            <person name="Jimenez-Jacinto V."/>
            <person name="Collado-Vides J."/>
            <person name="Davila G."/>
        </authorList>
    </citation>
    <scope>NUCLEOTIDE SEQUENCE [LARGE SCALE GENOMIC DNA]</scope>
    <source>
        <strain>ATCC 51251 / DSM 11541 / JCM 21823 / NBRC 15573 / CFN 42</strain>
    </source>
</reference>
<sequence length="195" mass="21982">MSAADVEYRVRHQAFWFVACLAVLVAQIIAEYLMGRVPICACGYVKLWEGGVNTSGNSQHLSDWYTPSHIIHGFLFYGLGYLILRRKPLAARLLLALMIESGWELLENSPLIIDRYRTATMALDYYGDSILNSAMDTVFMCLGFFFAARAPVALTVVIAIFFEIFTGYVIRDNLTLNVLMLIWPVEAIKVWQGGL</sequence>
<dbReference type="EMBL" id="CP000133">
    <property type="protein sequence ID" value="ABC92696.1"/>
    <property type="molecule type" value="Genomic_DNA"/>
</dbReference>
<dbReference type="RefSeq" id="WP_011427142.1">
    <property type="nucleotide sequence ID" value="NC_007761.1"/>
</dbReference>
<dbReference type="KEGG" id="ret:RHE_CH03951"/>
<dbReference type="eggNOG" id="ENOG502ZZUX">
    <property type="taxonomic scope" value="Bacteria"/>
</dbReference>
<dbReference type="HOGENOM" id="CLU_1395337_0_0_5"/>
<dbReference type="OrthoDB" id="9811954at2"/>
<dbReference type="Proteomes" id="UP000001936">
    <property type="component" value="Chromosome"/>
</dbReference>
<dbReference type="GO" id="GO:0005886">
    <property type="term" value="C:plasma membrane"/>
    <property type="evidence" value="ECO:0007669"/>
    <property type="project" value="UniProtKB-SubCell"/>
</dbReference>
<dbReference type="HAMAP" id="MF_01514">
    <property type="entry name" value="UPF0314"/>
    <property type="match status" value="1"/>
</dbReference>
<dbReference type="InterPro" id="IPR019691">
    <property type="entry name" value="DUF2585"/>
</dbReference>
<dbReference type="NCBIfam" id="NF002099">
    <property type="entry name" value="PRK00944.1"/>
    <property type="match status" value="1"/>
</dbReference>
<dbReference type="Pfam" id="PF10755">
    <property type="entry name" value="DUF2585"/>
    <property type="match status" value="1"/>
</dbReference>
<feature type="chain" id="PRO_0000248040" description="UPF0314 protein RHE_CH03951">
    <location>
        <begin position="1"/>
        <end position="195"/>
    </location>
</feature>
<feature type="transmembrane region" description="Helical" evidence="1">
    <location>
        <begin position="14"/>
        <end position="34"/>
    </location>
</feature>
<feature type="transmembrane region" description="Helical" evidence="1">
    <location>
        <begin position="64"/>
        <end position="84"/>
    </location>
</feature>
<feature type="transmembrane region" description="Helical" evidence="1">
    <location>
        <begin position="128"/>
        <end position="148"/>
    </location>
</feature>
<feature type="transmembrane region" description="Helical" evidence="1">
    <location>
        <begin position="150"/>
        <end position="170"/>
    </location>
</feature>
<protein>
    <recommendedName>
        <fullName evidence="1">UPF0314 protein RHE_CH03951</fullName>
    </recommendedName>
</protein>
<keyword id="KW-1003">Cell membrane</keyword>
<keyword id="KW-0472">Membrane</keyword>
<keyword id="KW-1185">Reference proteome</keyword>
<keyword id="KW-0812">Transmembrane</keyword>
<keyword id="KW-1133">Transmembrane helix</keyword>
<organism>
    <name type="scientific">Rhizobium etli (strain ATCC 51251 / DSM 11541 / JCM 21823 / NBRC 15573 / CFN 42)</name>
    <dbReference type="NCBI Taxonomy" id="347834"/>
    <lineage>
        <taxon>Bacteria</taxon>
        <taxon>Pseudomonadati</taxon>
        <taxon>Pseudomonadota</taxon>
        <taxon>Alphaproteobacteria</taxon>
        <taxon>Hyphomicrobiales</taxon>
        <taxon>Rhizobiaceae</taxon>
        <taxon>Rhizobium/Agrobacterium group</taxon>
        <taxon>Rhizobium</taxon>
    </lineage>
</organism>
<name>Y3951_RHIEC</name>
<proteinExistence type="inferred from homology"/>
<evidence type="ECO:0000255" key="1">
    <source>
        <dbReference type="HAMAP-Rule" id="MF_01514"/>
    </source>
</evidence>
<comment type="subcellular location">
    <subcellularLocation>
        <location evidence="1">Cell membrane</location>
        <topology evidence="1">Multi-pass membrane protein</topology>
    </subcellularLocation>
</comment>
<comment type="similarity">
    <text evidence="1">Belongs to the UPF0314 family.</text>
</comment>
<accession>Q2K390</accession>
<gene>
    <name type="ordered locus">RHE_CH03951</name>
</gene>